<gene>
    <name type="primary">CCP1</name>
    <name type="ordered locus">YALI0F20504g</name>
</gene>
<accession>Q6C0Z6</accession>
<feature type="transit peptide" description="Mitochondrion" evidence="3">
    <location>
        <begin position="1"/>
        <end position="17"/>
    </location>
</feature>
<feature type="chain" id="PRO_0000045297" description="Cytochrome c peroxidase, mitochondrial">
    <location>
        <begin position="18"/>
        <end position="340"/>
    </location>
</feature>
<feature type="region of interest" description="Disordered" evidence="6">
    <location>
        <begin position="175"/>
        <end position="198"/>
    </location>
</feature>
<feature type="active site" description="Proton acceptor" evidence="4 5">
    <location>
        <position position="101"/>
    </location>
</feature>
<feature type="active site" description="Tryptophan radical intermediate" evidence="1">
    <location>
        <position position="240"/>
    </location>
</feature>
<feature type="binding site" description="axial binding residue">
    <location>
        <position position="224"/>
    </location>
    <ligand>
        <name>heme b</name>
        <dbReference type="ChEBI" id="CHEBI:60344"/>
    </ligand>
    <ligandPart>
        <name>Fe</name>
        <dbReference type="ChEBI" id="CHEBI:18248"/>
    </ligandPart>
</feature>
<feature type="site" description="Transition state stabilizer" evidence="4">
    <location>
        <position position="97"/>
    </location>
</feature>
<protein>
    <recommendedName>
        <fullName>Cytochrome c peroxidase, mitochondrial</fullName>
        <shortName>CCP</shortName>
        <ecNumber evidence="2">1.11.1.5</ecNumber>
    </recommendedName>
</protein>
<comment type="function">
    <text evidence="2">Destroys radicals which are normally produced within the cells and which are toxic to biological systems.</text>
</comment>
<comment type="catalytic activity">
    <reaction evidence="2">
        <text>2 Fe(II)-[cytochrome c] + H2O2 + 2 H(+) = 2 Fe(III)-[cytochrome c] + 2 H2O</text>
        <dbReference type="Rhea" id="RHEA:16581"/>
        <dbReference type="Rhea" id="RHEA-COMP:10350"/>
        <dbReference type="Rhea" id="RHEA-COMP:14399"/>
        <dbReference type="ChEBI" id="CHEBI:15377"/>
        <dbReference type="ChEBI" id="CHEBI:15378"/>
        <dbReference type="ChEBI" id="CHEBI:16240"/>
        <dbReference type="ChEBI" id="CHEBI:29033"/>
        <dbReference type="ChEBI" id="CHEBI:29034"/>
        <dbReference type="EC" id="1.11.1.5"/>
    </reaction>
</comment>
<comment type="cofactor">
    <cofactor evidence="4">
        <name>heme b</name>
        <dbReference type="ChEBI" id="CHEBI:60344"/>
    </cofactor>
    <text evidence="4">Binds 1 heme b (iron(II)-protoporphyrin IX) group per subunit.</text>
</comment>
<comment type="subunit">
    <text evidence="2">Forms a one-to-one complex with cytochrome c.</text>
</comment>
<comment type="subcellular location">
    <subcellularLocation>
        <location evidence="2">Mitochondrion matrix</location>
    </subcellularLocation>
    <subcellularLocation>
        <location evidence="2">Mitochondrion intermembrane space</location>
    </subcellularLocation>
</comment>
<comment type="similarity">
    <text evidence="7">Belongs to the peroxidase family. Cytochrome c peroxidase subfamily.</text>
</comment>
<evidence type="ECO:0000250" key="1"/>
<evidence type="ECO:0000250" key="2">
    <source>
        <dbReference type="UniProtKB" id="P00431"/>
    </source>
</evidence>
<evidence type="ECO:0000255" key="3"/>
<evidence type="ECO:0000255" key="4">
    <source>
        <dbReference type="PROSITE-ProRule" id="PRU00297"/>
    </source>
</evidence>
<evidence type="ECO:0000255" key="5">
    <source>
        <dbReference type="PROSITE-ProRule" id="PRU10012"/>
    </source>
</evidence>
<evidence type="ECO:0000256" key="6">
    <source>
        <dbReference type="SAM" id="MobiDB-lite"/>
    </source>
</evidence>
<evidence type="ECO:0000305" key="7"/>
<dbReference type="EC" id="1.11.1.5" evidence="2"/>
<dbReference type="EMBL" id="CR382132">
    <property type="protein sequence ID" value="CAG78475.1"/>
    <property type="molecule type" value="Genomic_DNA"/>
</dbReference>
<dbReference type="RefSeq" id="XP_505666.1">
    <property type="nucleotide sequence ID" value="XM_505666.1"/>
</dbReference>
<dbReference type="SMR" id="Q6C0Z6"/>
<dbReference type="FunCoup" id="Q6C0Z6">
    <property type="interactions" value="82"/>
</dbReference>
<dbReference type="STRING" id="284591.Q6C0Z6"/>
<dbReference type="PeroxiBase" id="2343">
    <property type="entry name" value="YlCcP02"/>
</dbReference>
<dbReference type="EnsemblFungi" id="CAG78475">
    <property type="protein sequence ID" value="CAG78475"/>
    <property type="gene ID" value="YALI0_F20504g"/>
</dbReference>
<dbReference type="KEGG" id="yli:2908688"/>
<dbReference type="VEuPathDB" id="FungiDB:YALI0_F20504g"/>
<dbReference type="HOGENOM" id="CLU_036959_1_1_1"/>
<dbReference type="InParanoid" id="Q6C0Z6"/>
<dbReference type="OMA" id="MAKNYPV"/>
<dbReference type="OrthoDB" id="112659at4891"/>
<dbReference type="Proteomes" id="UP000001300">
    <property type="component" value="Chromosome F"/>
</dbReference>
<dbReference type="GO" id="GO:0005758">
    <property type="term" value="C:mitochondrial intermembrane space"/>
    <property type="evidence" value="ECO:0007669"/>
    <property type="project" value="UniProtKB-SubCell"/>
</dbReference>
<dbReference type="GO" id="GO:0005759">
    <property type="term" value="C:mitochondrial matrix"/>
    <property type="evidence" value="ECO:0007669"/>
    <property type="project" value="UniProtKB-SubCell"/>
</dbReference>
<dbReference type="GO" id="GO:0004130">
    <property type="term" value="F:cytochrome-c peroxidase activity"/>
    <property type="evidence" value="ECO:0007669"/>
    <property type="project" value="UniProtKB-EC"/>
</dbReference>
<dbReference type="GO" id="GO:0020037">
    <property type="term" value="F:heme binding"/>
    <property type="evidence" value="ECO:0007669"/>
    <property type="project" value="InterPro"/>
</dbReference>
<dbReference type="GO" id="GO:0046872">
    <property type="term" value="F:metal ion binding"/>
    <property type="evidence" value="ECO:0007669"/>
    <property type="project" value="UniProtKB-KW"/>
</dbReference>
<dbReference type="GO" id="GO:0004601">
    <property type="term" value="F:peroxidase activity"/>
    <property type="evidence" value="ECO:0000318"/>
    <property type="project" value="GO_Central"/>
</dbReference>
<dbReference type="GO" id="GO:0034599">
    <property type="term" value="P:cellular response to oxidative stress"/>
    <property type="evidence" value="ECO:0000318"/>
    <property type="project" value="GO_Central"/>
</dbReference>
<dbReference type="GO" id="GO:0042744">
    <property type="term" value="P:hydrogen peroxide catabolic process"/>
    <property type="evidence" value="ECO:0000318"/>
    <property type="project" value="GO_Central"/>
</dbReference>
<dbReference type="GO" id="GO:0000302">
    <property type="term" value="P:response to reactive oxygen species"/>
    <property type="evidence" value="ECO:0000318"/>
    <property type="project" value="GO_Central"/>
</dbReference>
<dbReference type="CDD" id="cd00691">
    <property type="entry name" value="ascorbate_peroxidase"/>
    <property type="match status" value="1"/>
</dbReference>
<dbReference type="FunFam" id="1.10.420.10:FF:000009">
    <property type="entry name" value="Ascorbate peroxidase"/>
    <property type="match status" value="1"/>
</dbReference>
<dbReference type="FunFam" id="1.10.520.10:FF:000005">
    <property type="entry name" value="Cytochrome c peroxidase"/>
    <property type="match status" value="1"/>
</dbReference>
<dbReference type="Gene3D" id="1.10.520.10">
    <property type="match status" value="1"/>
</dbReference>
<dbReference type="Gene3D" id="1.10.420.10">
    <property type="entry name" value="Peroxidase, domain 2"/>
    <property type="match status" value="1"/>
</dbReference>
<dbReference type="InterPro" id="IPR044831">
    <property type="entry name" value="Ccp1-like"/>
</dbReference>
<dbReference type="InterPro" id="IPR002016">
    <property type="entry name" value="Haem_peroxidase"/>
</dbReference>
<dbReference type="InterPro" id="IPR010255">
    <property type="entry name" value="Haem_peroxidase_sf"/>
</dbReference>
<dbReference type="InterPro" id="IPR002207">
    <property type="entry name" value="Peroxidase_I"/>
</dbReference>
<dbReference type="InterPro" id="IPR019794">
    <property type="entry name" value="Peroxidases_AS"/>
</dbReference>
<dbReference type="InterPro" id="IPR019793">
    <property type="entry name" value="Peroxidases_heam-ligand_BS"/>
</dbReference>
<dbReference type="PANTHER" id="PTHR31356:SF58">
    <property type="entry name" value="CYTOCHROME C PEROXIDASE, MITOCHONDRIAL"/>
    <property type="match status" value="1"/>
</dbReference>
<dbReference type="PANTHER" id="PTHR31356">
    <property type="entry name" value="THYLAKOID LUMENAL 29 KDA PROTEIN, CHLOROPLASTIC-RELATED"/>
    <property type="match status" value="1"/>
</dbReference>
<dbReference type="Pfam" id="PF00141">
    <property type="entry name" value="peroxidase"/>
    <property type="match status" value="1"/>
</dbReference>
<dbReference type="PRINTS" id="PR00459">
    <property type="entry name" value="ASPEROXIDASE"/>
</dbReference>
<dbReference type="PRINTS" id="PR00458">
    <property type="entry name" value="PEROXIDASE"/>
</dbReference>
<dbReference type="SUPFAM" id="SSF48113">
    <property type="entry name" value="Heme-dependent peroxidases"/>
    <property type="match status" value="1"/>
</dbReference>
<dbReference type="PROSITE" id="PS00435">
    <property type="entry name" value="PEROXIDASE_1"/>
    <property type="match status" value="1"/>
</dbReference>
<dbReference type="PROSITE" id="PS00436">
    <property type="entry name" value="PEROXIDASE_2"/>
    <property type="match status" value="1"/>
</dbReference>
<dbReference type="PROSITE" id="PS50873">
    <property type="entry name" value="PEROXIDASE_4"/>
    <property type="match status" value="1"/>
</dbReference>
<reference key="1">
    <citation type="journal article" date="2004" name="Nature">
        <title>Genome evolution in yeasts.</title>
        <authorList>
            <person name="Dujon B."/>
            <person name="Sherman D."/>
            <person name="Fischer G."/>
            <person name="Durrens P."/>
            <person name="Casaregola S."/>
            <person name="Lafontaine I."/>
            <person name="de Montigny J."/>
            <person name="Marck C."/>
            <person name="Neuveglise C."/>
            <person name="Talla E."/>
            <person name="Goffard N."/>
            <person name="Frangeul L."/>
            <person name="Aigle M."/>
            <person name="Anthouard V."/>
            <person name="Babour A."/>
            <person name="Barbe V."/>
            <person name="Barnay S."/>
            <person name="Blanchin S."/>
            <person name="Beckerich J.-M."/>
            <person name="Beyne E."/>
            <person name="Bleykasten C."/>
            <person name="Boisrame A."/>
            <person name="Boyer J."/>
            <person name="Cattolico L."/>
            <person name="Confanioleri F."/>
            <person name="de Daruvar A."/>
            <person name="Despons L."/>
            <person name="Fabre E."/>
            <person name="Fairhead C."/>
            <person name="Ferry-Dumazet H."/>
            <person name="Groppi A."/>
            <person name="Hantraye F."/>
            <person name="Hennequin C."/>
            <person name="Jauniaux N."/>
            <person name="Joyet P."/>
            <person name="Kachouri R."/>
            <person name="Kerrest A."/>
            <person name="Koszul R."/>
            <person name="Lemaire M."/>
            <person name="Lesur I."/>
            <person name="Ma L."/>
            <person name="Muller H."/>
            <person name="Nicaud J.-M."/>
            <person name="Nikolski M."/>
            <person name="Oztas S."/>
            <person name="Ozier-Kalogeropoulos O."/>
            <person name="Pellenz S."/>
            <person name="Potier S."/>
            <person name="Richard G.-F."/>
            <person name="Straub M.-L."/>
            <person name="Suleau A."/>
            <person name="Swennen D."/>
            <person name="Tekaia F."/>
            <person name="Wesolowski-Louvel M."/>
            <person name="Westhof E."/>
            <person name="Wirth B."/>
            <person name="Zeniou-Meyer M."/>
            <person name="Zivanovic Y."/>
            <person name="Bolotin-Fukuhara M."/>
            <person name="Thierry A."/>
            <person name="Bouchier C."/>
            <person name="Caudron B."/>
            <person name="Scarpelli C."/>
            <person name="Gaillardin C."/>
            <person name="Weissenbach J."/>
            <person name="Wincker P."/>
            <person name="Souciet J.-L."/>
        </authorList>
    </citation>
    <scope>NUCLEOTIDE SEQUENCE [LARGE SCALE GENOMIC DNA]</scope>
    <source>
        <strain>CLIB 122 / E 150</strain>
    </source>
</reference>
<sequence>MRSFRAVRNFSTTAKRLSQAPKASTPNASSGNGFVLAFVAAAAGAGAYYYYANSPAAKVETFNATKADYQKVYDAIADKLIEDDDYDDGSYGPVLLRLAWHSSGTYNKSDNKFGSSGGTMRFKPEASHAANNGLVNARNFLKPIHEKFPWISTGDLYTLGGVTAVQELGGPIIPWKRGRVDEPESASPPDGSLPDASQGATHVRNVFNRQGFNDQEMVALIGAHALGRCHKQNSGFEGPWTFSPTMFTNDFYKLLLDDKWQWKKWDGNPQYEDVKTKSLMMLPTDMALATDKNFKKWATAYAKDQDLFFKDFSAAFSKMLNNGVDFPQGTEIWEFKPKNA</sequence>
<keyword id="KW-0349">Heme</keyword>
<keyword id="KW-0408">Iron</keyword>
<keyword id="KW-0479">Metal-binding</keyword>
<keyword id="KW-0496">Mitochondrion</keyword>
<keyword id="KW-0560">Oxidoreductase</keyword>
<keyword id="KW-0575">Peroxidase</keyword>
<keyword id="KW-1185">Reference proteome</keyword>
<keyword id="KW-0809">Transit peptide</keyword>
<organism>
    <name type="scientific">Yarrowia lipolytica (strain CLIB 122 / E 150)</name>
    <name type="common">Yeast</name>
    <name type="synonym">Candida lipolytica</name>
    <dbReference type="NCBI Taxonomy" id="284591"/>
    <lineage>
        <taxon>Eukaryota</taxon>
        <taxon>Fungi</taxon>
        <taxon>Dikarya</taxon>
        <taxon>Ascomycota</taxon>
        <taxon>Saccharomycotina</taxon>
        <taxon>Dipodascomycetes</taxon>
        <taxon>Dipodascales</taxon>
        <taxon>Dipodascales incertae sedis</taxon>
        <taxon>Yarrowia</taxon>
    </lineage>
</organism>
<name>CCPR_YARLI</name>
<proteinExistence type="inferred from homology"/>